<proteinExistence type="inferred from homology"/>
<reference key="1">
    <citation type="submission" date="2006-06" db="EMBL/GenBank/DDBJ databases">
        <title>Complete sequence of chromosome of Mesorhizobium sp. BNC1.</title>
        <authorList>
            <consortium name="US DOE Joint Genome Institute"/>
            <person name="Copeland A."/>
            <person name="Lucas S."/>
            <person name="Lapidus A."/>
            <person name="Barry K."/>
            <person name="Detter J.C."/>
            <person name="Glavina del Rio T."/>
            <person name="Hammon N."/>
            <person name="Israni S."/>
            <person name="Dalin E."/>
            <person name="Tice H."/>
            <person name="Pitluck S."/>
            <person name="Chertkov O."/>
            <person name="Brettin T."/>
            <person name="Bruce D."/>
            <person name="Han C."/>
            <person name="Tapia R."/>
            <person name="Gilna P."/>
            <person name="Schmutz J."/>
            <person name="Larimer F."/>
            <person name="Land M."/>
            <person name="Hauser L."/>
            <person name="Kyrpides N."/>
            <person name="Mikhailova N."/>
            <person name="Richardson P."/>
        </authorList>
    </citation>
    <scope>NUCLEOTIDE SEQUENCE [LARGE SCALE GENOMIC DNA]</scope>
    <source>
        <strain>BNC1</strain>
    </source>
</reference>
<sequence length="391" mass="42794">MAKGKFERTKPHVNIGTIGHVDHGKTSLTAAITKYFGEFKAYDQIDAAPEEKARGITISTAHVEYETENRHYAHVDCPGHADYVKNMITGAAQMDGAILVVSAADGPMPQTREHILLARQVGVPAIVVFLNKVDQVDDPELLELVELEIRELLSKYEFPGDDIPIVKGSALAALEDSNKEIGEDAVRQLMAEVDKYIPTPERPIDQPFLMPIEDVFSISGRGTVVTGRVERGVVKVGEEVEIVGIRPTSKTTVTGVEMFRKLLDQGQAGDNIGALLRGIDREGVERGQVLAKPGSVTPHTKFKAEAYILTKEEGGRHTPFFTNYRPQFYFRTTDVTGVVTLPEGTEMVMPGDNVTMDVTLIVPIAMEERLRFAIREGGRTVGAGIVASITE</sequence>
<accession>Q11HA6</accession>
<feature type="chain" id="PRO_0000337430" description="Elongation factor Tu">
    <location>
        <begin position="1"/>
        <end position="391"/>
    </location>
</feature>
<feature type="domain" description="tr-type G">
    <location>
        <begin position="10"/>
        <end position="201"/>
    </location>
</feature>
<feature type="region of interest" description="G1" evidence="1">
    <location>
        <begin position="19"/>
        <end position="26"/>
    </location>
</feature>
<feature type="region of interest" description="G2" evidence="1">
    <location>
        <begin position="55"/>
        <end position="59"/>
    </location>
</feature>
<feature type="region of interest" description="G3" evidence="1">
    <location>
        <begin position="76"/>
        <end position="79"/>
    </location>
</feature>
<feature type="region of interest" description="G4" evidence="1">
    <location>
        <begin position="131"/>
        <end position="134"/>
    </location>
</feature>
<feature type="region of interest" description="G5" evidence="1">
    <location>
        <begin position="169"/>
        <end position="171"/>
    </location>
</feature>
<feature type="binding site" evidence="2">
    <location>
        <begin position="19"/>
        <end position="26"/>
    </location>
    <ligand>
        <name>GTP</name>
        <dbReference type="ChEBI" id="CHEBI:37565"/>
    </ligand>
</feature>
<feature type="binding site" evidence="2">
    <location>
        <position position="26"/>
    </location>
    <ligand>
        <name>Mg(2+)</name>
        <dbReference type="ChEBI" id="CHEBI:18420"/>
    </ligand>
</feature>
<feature type="binding site" evidence="2">
    <location>
        <begin position="76"/>
        <end position="80"/>
    </location>
    <ligand>
        <name>GTP</name>
        <dbReference type="ChEBI" id="CHEBI:37565"/>
    </ligand>
</feature>
<feature type="binding site" evidence="2">
    <location>
        <begin position="131"/>
        <end position="134"/>
    </location>
    <ligand>
        <name>GTP</name>
        <dbReference type="ChEBI" id="CHEBI:37565"/>
    </ligand>
</feature>
<organism>
    <name type="scientific">Chelativorans sp. (strain BNC1)</name>
    <dbReference type="NCBI Taxonomy" id="266779"/>
    <lineage>
        <taxon>Bacteria</taxon>
        <taxon>Pseudomonadati</taxon>
        <taxon>Pseudomonadota</taxon>
        <taxon>Alphaproteobacteria</taxon>
        <taxon>Hyphomicrobiales</taxon>
        <taxon>Phyllobacteriaceae</taxon>
        <taxon>Chelativorans</taxon>
    </lineage>
</organism>
<keyword id="KW-0963">Cytoplasm</keyword>
<keyword id="KW-0251">Elongation factor</keyword>
<keyword id="KW-0342">GTP-binding</keyword>
<keyword id="KW-0378">Hydrolase</keyword>
<keyword id="KW-0460">Magnesium</keyword>
<keyword id="KW-0479">Metal-binding</keyword>
<keyword id="KW-0547">Nucleotide-binding</keyword>
<keyword id="KW-0648">Protein biosynthesis</keyword>
<dbReference type="EC" id="3.6.5.3" evidence="2"/>
<dbReference type="EMBL" id="CP000390">
    <property type="protein sequence ID" value="ABG63075.1"/>
    <property type="molecule type" value="Genomic_DNA"/>
</dbReference>
<dbReference type="EMBL" id="CP000390">
    <property type="protein sequence ID" value="ABG63219.1"/>
    <property type="molecule type" value="Genomic_DNA"/>
</dbReference>
<dbReference type="SMR" id="Q11HA6"/>
<dbReference type="STRING" id="266779.Meso_1680"/>
<dbReference type="KEGG" id="mes:Meso_1680"/>
<dbReference type="KEGG" id="mes:Meso_1826"/>
<dbReference type="eggNOG" id="COG0050">
    <property type="taxonomic scope" value="Bacteria"/>
</dbReference>
<dbReference type="HOGENOM" id="CLU_007265_0_1_5"/>
<dbReference type="OrthoDB" id="9803139at2"/>
<dbReference type="GO" id="GO:0005829">
    <property type="term" value="C:cytosol"/>
    <property type="evidence" value="ECO:0007669"/>
    <property type="project" value="TreeGrafter"/>
</dbReference>
<dbReference type="GO" id="GO:0005525">
    <property type="term" value="F:GTP binding"/>
    <property type="evidence" value="ECO:0007669"/>
    <property type="project" value="UniProtKB-UniRule"/>
</dbReference>
<dbReference type="GO" id="GO:0003924">
    <property type="term" value="F:GTPase activity"/>
    <property type="evidence" value="ECO:0007669"/>
    <property type="project" value="InterPro"/>
</dbReference>
<dbReference type="GO" id="GO:0097216">
    <property type="term" value="F:guanosine tetraphosphate binding"/>
    <property type="evidence" value="ECO:0007669"/>
    <property type="project" value="UniProtKB-ARBA"/>
</dbReference>
<dbReference type="GO" id="GO:0003746">
    <property type="term" value="F:translation elongation factor activity"/>
    <property type="evidence" value="ECO:0007669"/>
    <property type="project" value="UniProtKB-UniRule"/>
</dbReference>
<dbReference type="CDD" id="cd01884">
    <property type="entry name" value="EF_Tu"/>
    <property type="match status" value="1"/>
</dbReference>
<dbReference type="CDD" id="cd03697">
    <property type="entry name" value="EFTU_II"/>
    <property type="match status" value="1"/>
</dbReference>
<dbReference type="CDD" id="cd03707">
    <property type="entry name" value="EFTU_III"/>
    <property type="match status" value="1"/>
</dbReference>
<dbReference type="FunFam" id="2.40.30.10:FF:000001">
    <property type="entry name" value="Elongation factor Tu"/>
    <property type="match status" value="1"/>
</dbReference>
<dbReference type="FunFam" id="3.40.50.300:FF:000003">
    <property type="entry name" value="Elongation factor Tu"/>
    <property type="match status" value="1"/>
</dbReference>
<dbReference type="Gene3D" id="3.40.50.300">
    <property type="entry name" value="P-loop containing nucleotide triphosphate hydrolases"/>
    <property type="match status" value="1"/>
</dbReference>
<dbReference type="Gene3D" id="2.40.30.10">
    <property type="entry name" value="Translation factors"/>
    <property type="match status" value="2"/>
</dbReference>
<dbReference type="HAMAP" id="MF_00118_B">
    <property type="entry name" value="EF_Tu_B"/>
    <property type="match status" value="1"/>
</dbReference>
<dbReference type="InterPro" id="IPR041709">
    <property type="entry name" value="EF-Tu_GTP-bd"/>
</dbReference>
<dbReference type="InterPro" id="IPR050055">
    <property type="entry name" value="EF-Tu_GTPase"/>
</dbReference>
<dbReference type="InterPro" id="IPR004161">
    <property type="entry name" value="EFTu-like_2"/>
</dbReference>
<dbReference type="InterPro" id="IPR033720">
    <property type="entry name" value="EFTU_2"/>
</dbReference>
<dbReference type="InterPro" id="IPR031157">
    <property type="entry name" value="G_TR_CS"/>
</dbReference>
<dbReference type="InterPro" id="IPR027417">
    <property type="entry name" value="P-loop_NTPase"/>
</dbReference>
<dbReference type="InterPro" id="IPR005225">
    <property type="entry name" value="Small_GTP-bd"/>
</dbReference>
<dbReference type="InterPro" id="IPR000795">
    <property type="entry name" value="T_Tr_GTP-bd_dom"/>
</dbReference>
<dbReference type="InterPro" id="IPR009000">
    <property type="entry name" value="Transl_B-barrel_sf"/>
</dbReference>
<dbReference type="InterPro" id="IPR009001">
    <property type="entry name" value="Transl_elong_EF1A/Init_IF2_C"/>
</dbReference>
<dbReference type="InterPro" id="IPR004541">
    <property type="entry name" value="Transl_elong_EFTu/EF1A_bac/org"/>
</dbReference>
<dbReference type="InterPro" id="IPR004160">
    <property type="entry name" value="Transl_elong_EFTu/EF1A_C"/>
</dbReference>
<dbReference type="NCBIfam" id="TIGR00485">
    <property type="entry name" value="EF-Tu"/>
    <property type="match status" value="1"/>
</dbReference>
<dbReference type="NCBIfam" id="NF000766">
    <property type="entry name" value="PRK00049.1"/>
    <property type="match status" value="1"/>
</dbReference>
<dbReference type="NCBIfam" id="NF009372">
    <property type="entry name" value="PRK12735.1"/>
    <property type="match status" value="1"/>
</dbReference>
<dbReference type="NCBIfam" id="NF009373">
    <property type="entry name" value="PRK12736.1"/>
    <property type="match status" value="1"/>
</dbReference>
<dbReference type="NCBIfam" id="TIGR00231">
    <property type="entry name" value="small_GTP"/>
    <property type="match status" value="1"/>
</dbReference>
<dbReference type="PANTHER" id="PTHR43721:SF22">
    <property type="entry name" value="ELONGATION FACTOR TU, MITOCHONDRIAL"/>
    <property type="match status" value="1"/>
</dbReference>
<dbReference type="PANTHER" id="PTHR43721">
    <property type="entry name" value="ELONGATION FACTOR TU-RELATED"/>
    <property type="match status" value="1"/>
</dbReference>
<dbReference type="Pfam" id="PF00009">
    <property type="entry name" value="GTP_EFTU"/>
    <property type="match status" value="1"/>
</dbReference>
<dbReference type="Pfam" id="PF03144">
    <property type="entry name" value="GTP_EFTU_D2"/>
    <property type="match status" value="1"/>
</dbReference>
<dbReference type="Pfam" id="PF03143">
    <property type="entry name" value="GTP_EFTU_D3"/>
    <property type="match status" value="1"/>
</dbReference>
<dbReference type="PRINTS" id="PR00315">
    <property type="entry name" value="ELONGATNFCT"/>
</dbReference>
<dbReference type="SUPFAM" id="SSF50465">
    <property type="entry name" value="EF-Tu/eEF-1alpha/eIF2-gamma C-terminal domain"/>
    <property type="match status" value="1"/>
</dbReference>
<dbReference type="SUPFAM" id="SSF52540">
    <property type="entry name" value="P-loop containing nucleoside triphosphate hydrolases"/>
    <property type="match status" value="1"/>
</dbReference>
<dbReference type="SUPFAM" id="SSF50447">
    <property type="entry name" value="Translation proteins"/>
    <property type="match status" value="1"/>
</dbReference>
<dbReference type="PROSITE" id="PS00301">
    <property type="entry name" value="G_TR_1"/>
    <property type="match status" value="1"/>
</dbReference>
<dbReference type="PROSITE" id="PS51722">
    <property type="entry name" value="G_TR_2"/>
    <property type="match status" value="1"/>
</dbReference>
<evidence type="ECO:0000250" key="1"/>
<evidence type="ECO:0000255" key="2">
    <source>
        <dbReference type="HAMAP-Rule" id="MF_00118"/>
    </source>
</evidence>
<gene>
    <name evidence="2" type="primary">tuf1</name>
    <name type="ordered locus">Meso_1680</name>
</gene>
<gene>
    <name evidence="2" type="primary">tuf2</name>
    <name type="ordered locus">Meso_1826</name>
</gene>
<comment type="function">
    <text evidence="2">GTP hydrolase that promotes the GTP-dependent binding of aminoacyl-tRNA to the A-site of ribosomes during protein biosynthesis.</text>
</comment>
<comment type="catalytic activity">
    <reaction evidence="2">
        <text>GTP + H2O = GDP + phosphate + H(+)</text>
        <dbReference type="Rhea" id="RHEA:19669"/>
        <dbReference type="ChEBI" id="CHEBI:15377"/>
        <dbReference type="ChEBI" id="CHEBI:15378"/>
        <dbReference type="ChEBI" id="CHEBI:37565"/>
        <dbReference type="ChEBI" id="CHEBI:43474"/>
        <dbReference type="ChEBI" id="CHEBI:58189"/>
        <dbReference type="EC" id="3.6.5.3"/>
    </reaction>
    <physiologicalReaction direction="left-to-right" evidence="2">
        <dbReference type="Rhea" id="RHEA:19670"/>
    </physiologicalReaction>
</comment>
<comment type="subunit">
    <text evidence="2">Monomer.</text>
</comment>
<comment type="subcellular location">
    <subcellularLocation>
        <location evidence="2">Cytoplasm</location>
    </subcellularLocation>
</comment>
<comment type="similarity">
    <text evidence="2">Belongs to the TRAFAC class translation factor GTPase superfamily. Classic translation factor GTPase family. EF-Tu/EF-1A subfamily.</text>
</comment>
<name>EFTU_CHESB</name>
<protein>
    <recommendedName>
        <fullName evidence="2">Elongation factor Tu</fullName>
        <shortName evidence="2">EF-Tu</shortName>
        <ecNumber evidence="2">3.6.5.3</ecNumber>
    </recommendedName>
</protein>